<protein>
    <recommendedName>
        <fullName>Tropomyosin alpha-1 chain</fullName>
    </recommendedName>
    <alternativeName>
        <fullName>Alpha-tropomyosin</fullName>
    </alternativeName>
    <alternativeName>
        <fullName>Tropomyosin-1</fullName>
    </alternativeName>
</protein>
<reference key="1">
    <citation type="journal article" date="1987" name="Biochem. Biophys. Res. Commun.">
        <title>Relation of streptococcal M protein with human and rabbit tropomyosin: the complete amino acid sequence of human cardiac alpha tropomyosin, a highly conserved contractile protein.</title>
        <authorList>
            <person name="Mische S.M."/>
            <person name="Manjula B.N."/>
            <person name="Fischetti V.A."/>
        </authorList>
    </citation>
    <scope>PROTEIN SEQUENCE (ISOFORM 1)</scope>
    <scope>ACETYLATION AT MET-1</scope>
</reference>
<reference key="2">
    <citation type="journal article" date="1988" name="Mol. Cell. Biol.">
        <title>Cloning and characterization of a cDNA encoding transformation-sensitive tropomyosin isoform 3 from tumorigenic human fibroblasts.</title>
        <authorList>
            <person name="Lin C.-S."/>
            <person name="Leavitt J."/>
        </authorList>
    </citation>
    <scope>NUCLEOTIDE SEQUENCE [MRNA] (ISOFORM 3)</scope>
    <source>
        <tissue>Fibroblast</tissue>
    </source>
</reference>
<reference key="3">
    <citation type="journal article" date="1988" name="Mol. Cell. Biol.">
        <title>Human hTM alpha gene: expression in muscle and nonmuscle tissue.</title>
        <authorList>
            <person name="McLeod A.R."/>
            <person name="Gooding C."/>
        </authorList>
    </citation>
    <scope>NUCLEOTIDE SEQUENCE [MRNA] (ISOFORMS 1 AND 3)</scope>
</reference>
<reference key="4">
    <citation type="journal article" date="2004" name="Biochem. Biophys. Res. Commun.">
        <title>Expression of a novel cardiac-specific tropomyosin isoform in humans.</title>
        <authorList>
            <person name="Denz C.R."/>
            <person name="Narshi A."/>
            <person name="Zajdel R.W."/>
            <person name="Dube D.K."/>
        </authorList>
    </citation>
    <scope>NUCLEOTIDE SEQUENCE [MRNA] (ISOFORMS 1 AND 6)</scope>
    <scope>TISSUE SPECIFICITY</scope>
    <source>
        <tissue>Heart</tissue>
    </source>
</reference>
<reference key="5">
    <citation type="journal article" date="2004" name="Nat. Genet.">
        <title>Complete sequencing and characterization of 21,243 full-length human cDNAs.</title>
        <authorList>
            <person name="Ota T."/>
            <person name="Suzuki Y."/>
            <person name="Nishikawa T."/>
            <person name="Otsuki T."/>
            <person name="Sugiyama T."/>
            <person name="Irie R."/>
            <person name="Wakamatsu A."/>
            <person name="Hayashi K."/>
            <person name="Sato H."/>
            <person name="Nagai K."/>
            <person name="Kimura K."/>
            <person name="Makita H."/>
            <person name="Sekine M."/>
            <person name="Obayashi M."/>
            <person name="Nishi T."/>
            <person name="Shibahara T."/>
            <person name="Tanaka T."/>
            <person name="Ishii S."/>
            <person name="Yamamoto J."/>
            <person name="Saito K."/>
            <person name="Kawai Y."/>
            <person name="Isono Y."/>
            <person name="Nakamura Y."/>
            <person name="Nagahari K."/>
            <person name="Murakami K."/>
            <person name="Yasuda T."/>
            <person name="Iwayanagi T."/>
            <person name="Wagatsuma M."/>
            <person name="Shiratori A."/>
            <person name="Sudo H."/>
            <person name="Hosoiri T."/>
            <person name="Kaku Y."/>
            <person name="Kodaira H."/>
            <person name="Kondo H."/>
            <person name="Sugawara M."/>
            <person name="Takahashi M."/>
            <person name="Kanda K."/>
            <person name="Yokoi T."/>
            <person name="Furuya T."/>
            <person name="Kikkawa E."/>
            <person name="Omura Y."/>
            <person name="Abe K."/>
            <person name="Kamihara K."/>
            <person name="Katsuta N."/>
            <person name="Sato K."/>
            <person name="Tanikawa M."/>
            <person name="Yamazaki M."/>
            <person name="Ninomiya K."/>
            <person name="Ishibashi T."/>
            <person name="Yamashita H."/>
            <person name="Murakawa K."/>
            <person name="Fujimori K."/>
            <person name="Tanai H."/>
            <person name="Kimata M."/>
            <person name="Watanabe M."/>
            <person name="Hiraoka S."/>
            <person name="Chiba Y."/>
            <person name="Ishida S."/>
            <person name="Ono Y."/>
            <person name="Takiguchi S."/>
            <person name="Watanabe S."/>
            <person name="Yosida M."/>
            <person name="Hotuta T."/>
            <person name="Kusano J."/>
            <person name="Kanehori K."/>
            <person name="Takahashi-Fujii A."/>
            <person name="Hara H."/>
            <person name="Tanase T.-O."/>
            <person name="Nomura Y."/>
            <person name="Togiya S."/>
            <person name="Komai F."/>
            <person name="Hara R."/>
            <person name="Takeuchi K."/>
            <person name="Arita M."/>
            <person name="Imose N."/>
            <person name="Musashino K."/>
            <person name="Yuuki H."/>
            <person name="Oshima A."/>
            <person name="Sasaki N."/>
            <person name="Aotsuka S."/>
            <person name="Yoshikawa Y."/>
            <person name="Matsunawa H."/>
            <person name="Ichihara T."/>
            <person name="Shiohata N."/>
            <person name="Sano S."/>
            <person name="Moriya S."/>
            <person name="Momiyama H."/>
            <person name="Satoh N."/>
            <person name="Takami S."/>
            <person name="Terashima Y."/>
            <person name="Suzuki O."/>
            <person name="Nakagawa S."/>
            <person name="Senoh A."/>
            <person name="Mizoguchi H."/>
            <person name="Goto Y."/>
            <person name="Shimizu F."/>
            <person name="Wakebe H."/>
            <person name="Hishigaki H."/>
            <person name="Watanabe T."/>
            <person name="Sugiyama A."/>
            <person name="Takemoto M."/>
            <person name="Kawakami B."/>
            <person name="Yamazaki M."/>
            <person name="Watanabe K."/>
            <person name="Kumagai A."/>
            <person name="Itakura S."/>
            <person name="Fukuzumi Y."/>
            <person name="Fujimori Y."/>
            <person name="Komiyama M."/>
            <person name="Tashiro H."/>
            <person name="Tanigami A."/>
            <person name="Fujiwara T."/>
            <person name="Ono T."/>
            <person name="Yamada K."/>
            <person name="Fujii Y."/>
            <person name="Ozaki K."/>
            <person name="Hirao M."/>
            <person name="Ohmori Y."/>
            <person name="Kawabata A."/>
            <person name="Hikiji T."/>
            <person name="Kobatake N."/>
            <person name="Inagaki H."/>
            <person name="Ikema Y."/>
            <person name="Okamoto S."/>
            <person name="Okitani R."/>
            <person name="Kawakami T."/>
            <person name="Noguchi S."/>
            <person name="Itoh T."/>
            <person name="Shigeta K."/>
            <person name="Senba T."/>
            <person name="Matsumura K."/>
            <person name="Nakajima Y."/>
            <person name="Mizuno T."/>
            <person name="Morinaga M."/>
            <person name="Sasaki M."/>
            <person name="Togashi T."/>
            <person name="Oyama M."/>
            <person name="Hata H."/>
            <person name="Watanabe M."/>
            <person name="Komatsu T."/>
            <person name="Mizushima-Sugano J."/>
            <person name="Satoh T."/>
            <person name="Shirai Y."/>
            <person name="Takahashi Y."/>
            <person name="Nakagawa K."/>
            <person name="Okumura K."/>
            <person name="Nagase T."/>
            <person name="Nomura N."/>
            <person name="Kikuchi H."/>
            <person name="Masuho Y."/>
            <person name="Yamashita R."/>
            <person name="Nakai K."/>
            <person name="Yada T."/>
            <person name="Nakamura Y."/>
            <person name="Ohara O."/>
            <person name="Isogai T."/>
            <person name="Sugano S."/>
        </authorList>
    </citation>
    <scope>NUCLEOTIDE SEQUENCE [LARGE SCALE MRNA] (ISOFORM 1)</scope>
    <source>
        <tissue>Tongue</tissue>
    </source>
</reference>
<reference key="6">
    <citation type="journal article" date="2007" name="BMC Genomics">
        <title>The full-ORF clone resource of the German cDNA consortium.</title>
        <authorList>
            <person name="Bechtel S."/>
            <person name="Rosenfelder H."/>
            <person name="Duda A."/>
            <person name="Schmidt C.P."/>
            <person name="Ernst U."/>
            <person name="Wellenreuther R."/>
            <person name="Mehrle A."/>
            <person name="Schuster C."/>
            <person name="Bahr A."/>
            <person name="Bloecker H."/>
            <person name="Heubner D."/>
            <person name="Hoerlein A."/>
            <person name="Michel G."/>
            <person name="Wedler H."/>
            <person name="Koehrer K."/>
            <person name="Ottenwaelder B."/>
            <person name="Poustka A."/>
            <person name="Wiemann S."/>
            <person name="Schupp I."/>
        </authorList>
    </citation>
    <scope>NUCLEOTIDE SEQUENCE [LARGE SCALE MRNA] (ISOFORM 7)</scope>
    <source>
        <tissue>Uterus</tissue>
    </source>
</reference>
<reference key="7">
    <citation type="submission" date="2009-12" db="EMBL/GenBank/DDBJ databases">
        <authorList>
            <consortium name="NHLBI resequencing and genotyping service (RS&amp;G)"/>
        </authorList>
    </citation>
    <scope>NUCLEOTIDE SEQUENCE [GENOMIC DNA]</scope>
</reference>
<reference key="8">
    <citation type="journal article" date="2006" name="Nature">
        <title>Analysis of the DNA sequence and duplication history of human chromosome 15.</title>
        <authorList>
            <person name="Zody M.C."/>
            <person name="Garber M."/>
            <person name="Sharpe T."/>
            <person name="Young S.K."/>
            <person name="Rowen L."/>
            <person name="O'Neill K."/>
            <person name="Whittaker C.A."/>
            <person name="Kamal M."/>
            <person name="Chang J.L."/>
            <person name="Cuomo C.A."/>
            <person name="Dewar K."/>
            <person name="FitzGerald M.G."/>
            <person name="Kodira C.D."/>
            <person name="Madan A."/>
            <person name="Qin S."/>
            <person name="Yang X."/>
            <person name="Abbasi N."/>
            <person name="Abouelleil A."/>
            <person name="Arachchi H.M."/>
            <person name="Baradarani L."/>
            <person name="Birditt B."/>
            <person name="Bloom S."/>
            <person name="Bloom T."/>
            <person name="Borowsky M.L."/>
            <person name="Burke J."/>
            <person name="Butler J."/>
            <person name="Cook A."/>
            <person name="DeArellano K."/>
            <person name="DeCaprio D."/>
            <person name="Dorris L. III"/>
            <person name="Dors M."/>
            <person name="Eichler E.E."/>
            <person name="Engels R."/>
            <person name="Fahey J."/>
            <person name="Fleetwood P."/>
            <person name="Friedman C."/>
            <person name="Gearin G."/>
            <person name="Hall J.L."/>
            <person name="Hensley G."/>
            <person name="Johnson E."/>
            <person name="Jones C."/>
            <person name="Kamat A."/>
            <person name="Kaur A."/>
            <person name="Locke D.P."/>
            <person name="Madan A."/>
            <person name="Munson G."/>
            <person name="Jaffe D.B."/>
            <person name="Lui A."/>
            <person name="Macdonald P."/>
            <person name="Mauceli E."/>
            <person name="Naylor J.W."/>
            <person name="Nesbitt R."/>
            <person name="Nicol R."/>
            <person name="O'Leary S.B."/>
            <person name="Ratcliffe A."/>
            <person name="Rounsley S."/>
            <person name="She X."/>
            <person name="Sneddon K.M.B."/>
            <person name="Stewart S."/>
            <person name="Sougnez C."/>
            <person name="Stone S.M."/>
            <person name="Topham K."/>
            <person name="Vincent D."/>
            <person name="Wang S."/>
            <person name="Zimmer A.R."/>
            <person name="Birren B.W."/>
            <person name="Hood L."/>
            <person name="Lander E.S."/>
            <person name="Nusbaum C."/>
        </authorList>
    </citation>
    <scope>NUCLEOTIDE SEQUENCE [LARGE SCALE GENOMIC DNA]</scope>
</reference>
<reference key="9">
    <citation type="submission" date="2005-07" db="EMBL/GenBank/DDBJ databases">
        <authorList>
            <person name="Mural R.J."/>
            <person name="Istrail S."/>
            <person name="Sutton G.G."/>
            <person name="Florea L."/>
            <person name="Halpern A.L."/>
            <person name="Mobarry C.M."/>
            <person name="Lippert R."/>
            <person name="Walenz B."/>
            <person name="Shatkay H."/>
            <person name="Dew I."/>
            <person name="Miller J.R."/>
            <person name="Flanigan M.J."/>
            <person name="Edwards N.J."/>
            <person name="Bolanos R."/>
            <person name="Fasulo D."/>
            <person name="Halldorsson B.V."/>
            <person name="Hannenhalli S."/>
            <person name="Turner R."/>
            <person name="Yooseph S."/>
            <person name="Lu F."/>
            <person name="Nusskern D.R."/>
            <person name="Shue B.C."/>
            <person name="Zheng X.H."/>
            <person name="Zhong F."/>
            <person name="Delcher A.L."/>
            <person name="Huson D.H."/>
            <person name="Kravitz S.A."/>
            <person name="Mouchard L."/>
            <person name="Reinert K."/>
            <person name="Remington K.A."/>
            <person name="Clark A.G."/>
            <person name="Waterman M.S."/>
            <person name="Eichler E.E."/>
            <person name="Adams M.D."/>
            <person name="Hunkapiller M.W."/>
            <person name="Myers E.W."/>
            <person name="Venter J.C."/>
        </authorList>
    </citation>
    <scope>NUCLEOTIDE SEQUENCE [LARGE SCALE GENOMIC DNA]</scope>
</reference>
<reference key="10">
    <citation type="journal article" date="2004" name="Genome Res.">
        <title>The status, quality, and expansion of the NIH full-length cDNA project: the Mammalian Gene Collection (MGC).</title>
        <authorList>
            <consortium name="The MGC Project Team"/>
        </authorList>
    </citation>
    <scope>NUCLEOTIDE SEQUENCE [LARGE SCALE MRNA] (ISOFORMS 4 AND 5)</scope>
    <source>
        <tissue>Brain</tissue>
        <tissue>Hippocampus</tissue>
        <tissue>Placenta</tissue>
    </source>
</reference>
<reference key="11">
    <citation type="journal article" date="1988" name="J. Mol. Evol.">
        <title>Evolution of tropomyosin functional domains: differential splicing and genomic constraints.</title>
        <authorList>
            <person name="Colote S."/>
            <person name="Widada J.S."/>
            <person name="Ferraz C."/>
            <person name="Bonhomme F."/>
            <person name="Marti J."/>
            <person name="Liautard J.-P."/>
        </authorList>
    </citation>
    <scope>NUCLEOTIDE SEQUENCE [MRNA] OF 58-284 (ISOFORM 2)</scope>
    <source>
        <tissue>Liver</tissue>
    </source>
</reference>
<reference key="12">
    <citation type="journal article" date="1993" name="J. Immunol.">
        <title>Autoimmunity to cytoskeletal protein tropomyosin. A clue to the pathogenetic mechanism for ulcerative colitis.</title>
        <authorList>
            <person name="Das K.M."/>
            <person name="Dasgupta A."/>
            <person name="Mandal A."/>
            <person name="Geng X."/>
        </authorList>
    </citation>
    <scope>PROTEIN SEQUENCE OF 134-149 AND 153-167</scope>
    <source>
        <tissue>Colon</tissue>
    </source>
</reference>
<reference key="13">
    <citation type="journal article" date="2002" name="Proteomics">
        <title>Cluster analysis of an extensive human breast cancer cell line protein expression map database.</title>
        <authorList>
            <person name="Harris R.A."/>
            <person name="Yang A."/>
            <person name="Stein R.C."/>
            <person name="Lucy K."/>
            <person name="Brusten L."/>
            <person name="Herath A."/>
            <person name="Parekh R."/>
            <person name="Waterfield M.D."/>
            <person name="O'Hare M.J."/>
            <person name="Neville M.A."/>
            <person name="Page M.J."/>
            <person name="Zvelebil M.J."/>
        </authorList>
    </citation>
    <scope>MASS SPECTROMETRY</scope>
    <source>
        <tissue>Mammary cancer</tissue>
    </source>
</reference>
<reference key="14">
    <citation type="journal article" date="2007" name="J. Cell Sci.">
        <title>DAP kinase mediates the phosphorylation of tropomyosin-1 downstream of the ERK pathway, which regulates the formation of stress fibers in response to oxidative stress.</title>
        <authorList>
            <person name="Houle F."/>
            <person name="Poirier A."/>
            <person name="Dumaresq J."/>
            <person name="Huot J."/>
        </authorList>
    </citation>
    <scope>PHOSPHORYLATION AT SER-283</scope>
    <scope>MUTAGENESIS OF SER-283</scope>
</reference>
<reference key="15">
    <citation type="submission" date="2007-04" db="UniProtKB">
        <authorList>
            <person name="Ahamed M.E."/>
        </authorList>
    </citation>
    <scope>TISSUE SPECIFICITY</scope>
    <scope>IDENTIFICATION BY MASS SPECTROMETRY</scope>
</reference>
<reference key="16">
    <citation type="journal article" date="2008" name="Proc. Natl. Acad. Sci. U.S.A.">
        <title>A quantitative atlas of mitotic phosphorylation.</title>
        <authorList>
            <person name="Dephoure N."/>
            <person name="Zhou C."/>
            <person name="Villen J."/>
            <person name="Beausoleil S.A."/>
            <person name="Bakalarski C.E."/>
            <person name="Elledge S.J."/>
            <person name="Gygi S.P."/>
        </authorList>
    </citation>
    <scope>IDENTIFICATION BY MASS SPECTROMETRY [LARGE SCALE ANALYSIS]</scope>
    <source>
        <tissue>Cervix carcinoma</tissue>
    </source>
</reference>
<reference key="17">
    <citation type="journal article" date="2009" name="Science">
        <title>Lysine acetylation targets protein complexes and co-regulates major cellular functions.</title>
        <authorList>
            <person name="Choudhary C."/>
            <person name="Kumar C."/>
            <person name="Gnad F."/>
            <person name="Nielsen M.L."/>
            <person name="Rehman M."/>
            <person name="Walther T.C."/>
            <person name="Olsen J.V."/>
            <person name="Mann M."/>
        </authorList>
    </citation>
    <scope>ACETYLATION [LARGE SCALE ANALYSIS] AT LYS-213 (ISOFORMS 10; 3; 4 AND 8)</scope>
    <scope>IDENTIFICATION BY MASS SPECTROMETRY [LARGE SCALE ANALYSIS]</scope>
</reference>
<reference key="18">
    <citation type="journal article" date="2011" name="BMC Syst. Biol.">
        <title>Initial characterization of the human central proteome.</title>
        <authorList>
            <person name="Burkard T.R."/>
            <person name="Planyavsky M."/>
            <person name="Kaupe I."/>
            <person name="Breitwieser F.P."/>
            <person name="Buerckstuemmer T."/>
            <person name="Bennett K.L."/>
            <person name="Superti-Furga G."/>
            <person name="Colinge J."/>
        </authorList>
    </citation>
    <scope>IDENTIFICATION BY MASS SPECTROMETRY [LARGE SCALE ANALYSIS]</scope>
</reference>
<reference key="19">
    <citation type="journal article" date="2012" name="Biochemistry">
        <title>alpha-Tropomyosin with a D175N or E180G mutation in only one chain differs from tropomyosin with mutations in both chains.</title>
        <authorList>
            <person name="Janco M."/>
            <person name="Kalyva A."/>
            <person name="Scellini B."/>
            <person name="Piroddi N."/>
            <person name="Tesi C."/>
            <person name="Poggesi C."/>
            <person name="Geeves M.A."/>
        </authorList>
    </citation>
    <scope>FUNCTION</scope>
    <scope>CHARACTERIZATION OF VARIANTS CMH3 ASN-175 AND GLY-180</scope>
    <scope>SUBUNIT</scope>
</reference>
<reference key="20">
    <citation type="journal article" date="2014" name="J. Proteomics">
        <title>An enzyme assisted RP-RPLC approach for in-depth analysis of human liver phosphoproteome.</title>
        <authorList>
            <person name="Bian Y."/>
            <person name="Song C."/>
            <person name="Cheng K."/>
            <person name="Dong M."/>
            <person name="Wang F."/>
            <person name="Huang J."/>
            <person name="Sun D."/>
            <person name="Wang L."/>
            <person name="Ye M."/>
            <person name="Zou H."/>
        </authorList>
    </citation>
    <scope>PHOSPHORYLATION [LARGE SCALE ANALYSIS] AT SER-174</scope>
    <scope>PHOSPHORYLATION [LARGE SCALE ANALYSIS] AT SER-31 (ISOFORM 2)</scope>
    <scope>PHOSPHORYLATION [LARGE SCALE ANALYSIS] AT SER-51 (ISOFORM 5)</scope>
    <scope>IDENTIFICATION BY MASS SPECTROMETRY [LARGE SCALE ANALYSIS]</scope>
    <source>
        <tissue>Liver</tissue>
    </source>
</reference>
<reference key="21">
    <citation type="journal article" date="2016" name="Biochim. Biophys. Acta">
        <title>Localization of the binding interface between leiomodin-2 and alpha-tropomyosin.</title>
        <authorList>
            <person name="Colpan M."/>
            <person name="Tolkatchev D."/>
            <person name="Grover S."/>
            <person name="Helms G.L."/>
            <person name="Cort J.R."/>
            <person name="Moroz N."/>
            <person name="Kostyukova A.S."/>
        </authorList>
    </citation>
    <scope>INTERACTION WITH LMOD2</scope>
</reference>
<reference key="22">
    <citation type="journal article" date="1994" name="Cell">
        <title>Alpha-tropomyosin and cardiac troponin T mutations cause familial hypertrophic cardiomyopathy: a disease of the sarcomere.</title>
        <authorList>
            <person name="Thierfelder L."/>
            <person name="Watkins H."/>
            <person name="Macrae C."/>
            <person name="Lamas R."/>
            <person name="McKenna W.J."/>
            <person name="Vosberg H.-P."/>
            <person name="Seidman J.G."/>
            <person name="Seidman C.E."/>
        </authorList>
    </citation>
    <scope>VARIANTS CMH3 ASN-175 AND GLY-180</scope>
</reference>
<reference key="23">
    <citation type="journal article" date="1995" name="J. Mol. Cell. Cardiol.">
        <title>Novel missense mutation in alpha-tropomyosin gene found in Japanese patients with hypertrophic cardiomyopathy.</title>
        <authorList>
            <person name="Nakajima-Taniguchi C."/>
            <person name="Matsui H."/>
            <person name="Nagata S."/>
            <person name="Kishimoto T."/>
            <person name="Yamauchi-Takihara K."/>
        </authorList>
    </citation>
    <scope>VARIANTS CMH3 VAL-63 AND ASN-175</scope>
</reference>
<reference key="24">
    <citation type="journal article" date="1995" name="N. Engl. J. Med.">
        <title>Mutations in the genes for cardiac troponin T and alpha-tropomyosin in hypertrophic cardiomyopathy.</title>
        <authorList>
            <person name="Watkins H."/>
            <person name="McKenna W.J."/>
            <person name="Thierfelder L."/>
            <person name="Suk H.J."/>
            <person name="Anan R."/>
            <person name="O'Donoghue A."/>
            <person name="Spirito P."/>
            <person name="Matsumori A."/>
            <person name="Moravec C.S."/>
            <person name="Seidman J.G."/>
            <person name="Seidman C.E."/>
        </authorList>
    </citation>
    <scope>VARIANT CMH3 ASN-175</scope>
</reference>
<reference key="25">
    <citation type="journal article" date="1998" name="J. Am. Coll. Cardiol.">
        <title>The cardiac beta-myosin heavy chain gene is not the predominant gene for hypertrophic cardiomyopathy in the Finnish population.</title>
        <authorList>
            <person name="Jaeaeskelaeinen P."/>
            <person name="Soranta M."/>
            <person name="Miettinen R."/>
            <person name="Saarinen L."/>
            <person name="Pihlajamaeki J."/>
            <person name="Silvennoinen K."/>
            <person name="Tikanoja T."/>
            <person name="Laakso M."/>
            <person name="Kuusisto J."/>
        </authorList>
    </citation>
    <scope>VARIANT CMH3 ASN-175</scope>
</reference>
<reference key="26">
    <citation type="journal article" date="2001" name="J. Mol. Cell. Cardiol.">
        <title>Mutations that alter the surface charge of alpha-tropomyosin are associated with dilated cardiomyopathy.</title>
        <authorList>
            <person name="Olson T.M."/>
            <person name="Kishimoto N.Y."/>
            <person name="Whitby F.G."/>
            <person name="Michels V.V."/>
        </authorList>
    </citation>
    <scope>VARIANTS CMD1Y LYS-40 AND LYS-54</scope>
</reference>
<reference key="27">
    <citation type="journal article" date="2003" name="Clin. Genet.">
        <title>Mutation spectrum in a large cohort of unrelated consecutive patients with hypertrophic cardiomyopathy.</title>
        <authorList>
            <person name="Erdmann J."/>
            <person name="Daehmlow S."/>
            <person name="Wischke S."/>
            <person name="Senyuva M."/>
            <person name="Werner U."/>
            <person name="Raible J."/>
            <person name="Tanis N."/>
            <person name="Dyachenko S."/>
            <person name="Hummel M."/>
            <person name="Hetzer R."/>
            <person name="Regitz-Zagrosek V."/>
        </authorList>
    </citation>
    <scope>VARIANT CMH3 VAL-180</scope>
</reference>
<reference key="28">
    <citation type="journal article" date="2011" name="Circ. Cardiovasc. Genet.">
        <title>Sarcomere gene mutations in isolated left ventricular noncompaction cardiomyopathy do not predict clinical phenotype.</title>
        <authorList>
            <person name="Probst S."/>
            <person name="Oechslin E."/>
            <person name="Schuler P."/>
            <person name="Greutmann M."/>
            <person name="Boye P."/>
            <person name="Knirsch W."/>
            <person name="Berger F."/>
            <person name="Thierfelder L."/>
            <person name="Jenni R."/>
            <person name="Klaassen S."/>
        </authorList>
    </citation>
    <scope>VARIANTS LVNC9 LYS-192 AND GLU-248</scope>
</reference>
<name>TPM1_HUMAN</name>
<keyword id="KW-0002">3D-structure</keyword>
<keyword id="KW-0007">Acetylation</keyword>
<keyword id="KW-0009">Actin-binding</keyword>
<keyword id="KW-0025">Alternative splicing</keyword>
<keyword id="KW-0122">Cardiomyopathy</keyword>
<keyword id="KW-0175">Coiled coil</keyword>
<keyword id="KW-0963">Cytoplasm</keyword>
<keyword id="KW-0206">Cytoskeleton</keyword>
<keyword id="KW-0903">Direct protein sequencing</keyword>
<keyword id="KW-0225">Disease variant</keyword>
<keyword id="KW-0514">Muscle protein</keyword>
<keyword id="KW-0597">Phosphoprotein</keyword>
<keyword id="KW-1267">Proteomics identification</keyword>
<keyword id="KW-1185">Reference proteome</keyword>
<proteinExistence type="evidence at protein level"/>
<accession>P09493</accession>
<accession>B7Z5T7</accession>
<accession>D9YZV2</accession>
<accession>D9YZV3</accession>
<accession>D9YZV8</accession>
<accession>P09494</accession>
<accession>P10469</accession>
<accession>Q6DV89</accession>
<accession>Q6DV90</accession>
<accession>Q7Z6L8</accession>
<accession>Q86W64</accession>
<accession>Q96IK2</accession>
<accession>Q9UCI1</accession>
<accession>Q9UCI2</accession>
<accession>Q9UCY9</accession>
<accession>Q9Y427</accession>
<comment type="function">
    <text>Binds to actin filaments in muscle and non-muscle cells (PubMed:23170982). Plays a central role, in association with the troponin complex, in the calcium dependent regulation of vertebrate striated muscle contraction (PubMed:23170982). Smooth muscle contraction is regulated by interaction with caldesmon. In non-muscle cells is implicated in stabilizing cytoskeleton actin filaments.</text>
</comment>
<comment type="subunit">
    <text evidence="1 2 3 12 13">Homodimer (PubMed:23170982). Heterodimer of an alpha (TPM1, TPM3 or TPM4) and a beta (TPM2) chain (By similarity). Interacts with HRG (via the HRR domain); the interaction contributes to the antiangiogenic properties of the histidine/proline-rich region (HRR) of HRG (By similarity). Interacts (via N-terminus) with LMOD2 (via N-terminus) and TMOD1 (via N-terminus) (PubMed:26873245).</text>
</comment>
<comment type="interaction">
    <interactant intactId="EBI-351158">
        <id>P09493</id>
    </interactant>
    <interactant intactId="EBI-747505">
        <id>Q8TAB5</id>
        <label>C1orf216</label>
    </interactant>
    <organismsDiffer>false</organismsDiffer>
    <experiments>3</experiments>
</comment>
<comment type="interaction">
    <interactant intactId="EBI-351158">
        <id>P09493</id>
    </interactant>
    <interactant intactId="EBI-10196469">
        <id>Q8TC20</id>
        <label>CAGE1</label>
    </interactant>
    <organismsDiffer>false</organismsDiffer>
    <experiments>3</experiments>
</comment>
<comment type="interaction">
    <interactant intactId="EBI-351158">
        <id>P09493</id>
    </interactant>
    <interactant intactId="EBI-618309">
        <id>Q08379</id>
        <label>GOLGA2</label>
    </interactant>
    <organismsDiffer>false</organismsDiffer>
    <experiments>3</experiments>
</comment>
<comment type="interaction">
    <interactant intactId="EBI-351158">
        <id>P09493</id>
    </interactant>
    <interactant intactId="EBI-739657">
        <id>Q9BQD3</id>
        <label>KXD1</label>
    </interactant>
    <organismsDiffer>false</organismsDiffer>
    <experiments>6</experiments>
</comment>
<comment type="interaction">
    <interactant intactId="EBI-351158">
        <id>P09493</id>
    </interactant>
    <interactant intactId="EBI-742610">
        <id>Q9Y6D9</id>
        <label>MAD1L1</label>
    </interactant>
    <organismsDiffer>false</organismsDiffer>
    <experiments>7</experiments>
</comment>
<comment type="interaction">
    <interactant intactId="EBI-351158">
        <id>P09493</id>
    </interactant>
    <interactant intactId="EBI-6872807">
        <id>Q8N0S2</id>
        <label>SYCE1</label>
    </interactant>
    <organismsDiffer>false</organismsDiffer>
    <experiments>4</experiments>
</comment>
<comment type="interaction">
    <interactant intactId="EBI-351158">
        <id>P09493</id>
    </interactant>
    <interactant intactId="EBI-726527">
        <id>P13805</id>
        <label>TNNT1</label>
    </interactant>
    <organismsDiffer>false</organismsDiffer>
    <experiments>4</experiments>
</comment>
<comment type="interaction">
    <interactant intactId="EBI-351158">
        <id>P09493</id>
    </interactant>
    <interactant intactId="EBI-352633">
        <id>P07951</id>
        <label>TPM2</label>
    </interactant>
    <organismsDiffer>false</organismsDiffer>
    <experiments>3</experiments>
</comment>
<comment type="interaction">
    <interactant intactId="EBI-10196387">
        <id>P09493-5</id>
    </interactant>
    <interactant intactId="EBI-618309">
        <id>Q08379</id>
        <label>GOLGA2</label>
    </interactant>
    <organismsDiffer>false</organismsDiffer>
    <experiments>3</experiments>
</comment>
<comment type="interaction">
    <interactant intactId="EBI-10196387">
        <id>P09493-5</id>
    </interactant>
    <interactant intactId="EBI-10330141">
        <id>V9HW56</id>
        <label>HEL-S-108</label>
    </interactant>
    <organismsDiffer>false</organismsDiffer>
    <experiments>3</experiments>
</comment>
<comment type="interaction">
    <interactant intactId="EBI-10196387">
        <id>P09493-5</id>
    </interactant>
    <interactant intactId="EBI-739657">
        <id>Q9BQD3</id>
        <label>KXD1</label>
    </interactant>
    <organismsDiffer>false</organismsDiffer>
    <experiments>3</experiments>
</comment>
<comment type="interaction">
    <interactant intactId="EBI-10196387">
        <id>P09493-5</id>
    </interactant>
    <interactant intactId="EBI-6872807">
        <id>Q8N0S2</id>
        <label>SYCE1</label>
    </interactant>
    <organismsDiffer>false</organismsDiffer>
    <experiments>3</experiments>
</comment>
<comment type="interaction">
    <interactant intactId="EBI-10196387">
        <id>P09493-5</id>
    </interactant>
    <interactant intactId="EBI-10178002">
        <id>P0C1Z6-2</id>
        <label>TFPT</label>
    </interactant>
    <organismsDiffer>false</organismsDiffer>
    <experiments>3</experiments>
</comment>
<comment type="interaction">
    <interactant intactId="EBI-12123928">
        <id>P09493-10</id>
    </interactant>
    <interactant intactId="EBI-465781">
        <id>Q9UL45</id>
        <label>BLOC1S6</label>
    </interactant>
    <organismsDiffer>false</organismsDiffer>
    <experiments>5</experiments>
</comment>
<comment type="interaction">
    <interactant intactId="EBI-12123928">
        <id>P09493-10</id>
    </interactant>
    <interactant intactId="EBI-11522698">
        <id>Q8TC20-4</id>
        <label>CAGE1</label>
    </interactant>
    <organismsDiffer>false</organismsDiffer>
    <experiments>4</experiments>
</comment>
<comment type="interaction">
    <interactant intactId="EBI-12123928">
        <id>P09493-10</id>
    </interactant>
    <interactant intactId="EBI-10175300">
        <id>Q8TD31-3</id>
        <label>CCHCR1</label>
    </interactant>
    <organismsDiffer>false</organismsDiffer>
    <experiments>3</experiments>
</comment>
<comment type="interaction">
    <interactant intactId="EBI-12123928">
        <id>P09493-10</id>
    </interactant>
    <interactant intactId="EBI-12382974">
        <id>Q2M329</id>
        <label>CFAP184</label>
    </interactant>
    <organismsDiffer>false</organismsDiffer>
    <experiments>3</experiments>
</comment>
<comment type="interaction">
    <interactant intactId="EBI-12123928">
        <id>P09493-10</id>
    </interactant>
    <interactant intactId="EBI-2870039">
        <id>Q8IZT9</id>
        <label>FAM9C</label>
    </interactant>
    <organismsDiffer>false</organismsDiffer>
    <experiments>3</experiments>
</comment>
<comment type="interaction">
    <interactant intactId="EBI-12123928">
        <id>P09493-10</id>
    </interactant>
    <interactant intactId="EBI-9640259">
        <id>P02671-2</id>
        <label>FGA</label>
    </interactant>
    <organismsDiffer>false</organismsDiffer>
    <experiments>3</experiments>
</comment>
<comment type="interaction">
    <interactant intactId="EBI-12123928">
        <id>P09493-10</id>
    </interactant>
    <interactant intactId="EBI-618309">
        <id>Q08379</id>
        <label>GOLGA2</label>
    </interactant>
    <organismsDiffer>false</organismsDiffer>
    <experiments>3</experiments>
</comment>
<comment type="interaction">
    <interactant intactId="EBI-12123928">
        <id>P09493-10</id>
    </interactant>
    <interactant intactId="EBI-745127">
        <id>O14879</id>
        <label>IFIT3</label>
    </interactant>
    <organismsDiffer>false</organismsDiffer>
    <experiments>4</experiments>
</comment>
<comment type="interaction">
    <interactant intactId="EBI-12123928">
        <id>P09493-10</id>
    </interactant>
    <interactant intactId="EBI-739657">
        <id>Q9BQD3</id>
        <label>KXD1</label>
    </interactant>
    <organismsDiffer>false</organismsDiffer>
    <experiments>7</experiments>
</comment>
<comment type="interaction">
    <interactant intactId="EBI-12123928">
        <id>P09493-10</id>
    </interactant>
    <interactant intactId="EBI-742610">
        <id>Q9Y6D9</id>
        <label>MAD1L1</label>
    </interactant>
    <organismsDiffer>false</organismsDiffer>
    <experiments>6</experiments>
</comment>
<comment type="interaction">
    <interactant intactId="EBI-12123928">
        <id>P09493-10</id>
    </interactant>
    <interactant intactId="EBI-357745">
        <id>P62195</id>
        <label>PSMC5</label>
    </interactant>
    <organismsDiffer>false</organismsDiffer>
    <experiments>3</experiments>
</comment>
<comment type="interaction">
    <interactant intactId="EBI-12123928">
        <id>P09493-10</id>
    </interactant>
    <interactant intactId="EBI-6872807">
        <id>Q8N0S2</id>
        <label>SYCE1</label>
    </interactant>
    <organismsDiffer>false</organismsDiffer>
    <experiments>4</experiments>
</comment>
<comment type="interaction">
    <interactant intactId="EBI-12123928">
        <id>P09493-10</id>
    </interactant>
    <interactant intactId="EBI-1245626">
        <id>P0C1Z6</id>
        <label>TFPT</label>
    </interactant>
    <organismsDiffer>false</organismsDiffer>
    <experiments>3</experiments>
</comment>
<comment type="interaction">
    <interactant intactId="EBI-12123928">
        <id>P09493-10</id>
    </interactant>
    <interactant intactId="EBI-12151635">
        <id>P13805-3</id>
        <label>TNNT1</label>
    </interactant>
    <organismsDiffer>false</organismsDiffer>
    <experiments>4</experiments>
</comment>
<comment type="interaction">
    <interactant intactId="EBI-12123928">
        <id>P09493-10</id>
    </interactant>
    <interactant intactId="EBI-399269">
        <id>O95619</id>
        <label>YEATS4</label>
    </interactant>
    <organismsDiffer>false</organismsDiffer>
    <experiments>3</experiments>
</comment>
<comment type="subcellular location">
    <subcellularLocation>
        <location evidence="3">Cytoplasm</location>
        <location evidence="3">Cytoskeleton</location>
    </subcellularLocation>
    <text evidence="3">Associates with F-actin stress fibers.</text>
</comment>
<comment type="alternative products">
    <event type="alternative splicing"/>
    <isoform>
        <id>P09493-1</id>
        <name>1</name>
        <name>Skeletal muscle</name>
        <name>TPM1alpha</name>
        <sequence type="displayed"/>
    </isoform>
    <isoform>
        <id>P09493-2</id>
        <name>2</name>
        <name>Smooth muscle</name>
        <sequence type="described" ref="VSP_006576 VSP_006578 VSP_006579"/>
    </isoform>
    <isoform>
        <id>P09493-3</id>
        <name>3</name>
        <name>Fibroblast</name>
        <name>TM3</name>
        <sequence type="described" ref="VSP_006577 VSP_006579"/>
    </isoform>
    <isoform>
        <id>P09493-4</id>
        <name>4</name>
        <sequence type="described" ref="VSP_006577"/>
    </isoform>
    <isoform>
        <id>P09493-5</id>
        <name>5</name>
        <sequence type="described" ref="VSP_017498 VSP_017499"/>
    </isoform>
    <isoform>
        <id>P09493-6</id>
        <name>6</name>
        <name>10</name>
        <name>TPM1kappa</name>
        <sequence type="described" ref="VSP_036064"/>
    </isoform>
    <isoform>
        <id>P09493-7</id>
        <name>7</name>
        <sequence type="described" ref="VSP_036064 VSP_006579"/>
    </isoform>
    <isoform>
        <id>P09493-8</id>
        <name>8</name>
        <sequence type="described" ref="VSP_047297 VSP_047298 VSP_047299 VSP_047300 VSP_006579"/>
    </isoform>
    <isoform>
        <id>P09493-9</id>
        <name>9</name>
        <sequence type="described" ref="VSP_006579"/>
    </isoform>
    <isoform>
        <id>P09493-10</id>
        <name>10</name>
        <sequence type="described" ref="VSP_047299 VSP_047300 VSP_047301"/>
    </isoform>
    <text>Additional isoforms seem to exist.</text>
</comment>
<comment type="tissue specificity">
    <text evidence="9 19">Detected in primary breast cancer tissues but undetectable in normal breast tissues in Sudanese patients. Isoform 1 is expressed in adult and fetal skeletal muscle and cardiac tissues, with higher expression levels in the cardiac tissues. Isoform 10 is expressed in adult and fetal cardiac tissues, but not in skeletal muscle.</text>
</comment>
<comment type="domain">
    <text>The molecule is in a coiled coil structure that is formed by 2 polypeptide chains. The sequence exhibits a prominent seven-residues periodicity.</text>
</comment>
<comment type="PTM">
    <text evidence="10">Phosphorylated at Ser-283 by DAPK1 in response to oxidative stress and this phosphorylation enhances stress fiber formation in endothelial cells.</text>
</comment>
<comment type="mass spectrometry">
    <molecule>Isoform 3</molecule>
    <text>The measured range is 1-284.</text>
</comment>
<comment type="disease" evidence="8 12 15 16 17 18">
    <disease id="DI-00235">
        <name>Cardiomyopathy, familial hypertrophic, 3</name>
        <acronym>CMH3</acronym>
        <description>A hereditary heart disorder characterized by ventricular hypertrophy, which is usually asymmetric and often involves the interventricular septum. The symptoms include dyspnea, syncope, collapse, palpitations, and chest pain. They can be readily provoked by exercise. The disorder has inter- and intrafamilial variability ranging from benign to malignant forms with high risk of cardiac failure and sudden cardiac death.</description>
        <dbReference type="MIM" id="115196"/>
    </disease>
    <text>The disease is caused by variants affecting the gene represented in this entry.</text>
</comment>
<comment type="disease" evidence="6">
    <disease id="DI-00226">
        <name>Cardiomyopathy, dilated, 1Y</name>
        <acronym>CMD1Y</acronym>
        <description>A disorder characterized by ventricular dilation and impaired systolic function, resulting in congestive heart failure and arrhythmia. Patients are at risk of premature death.</description>
        <dbReference type="MIM" id="611878"/>
    </disease>
    <text>The disease is caused by variants affecting the gene represented in this entry.</text>
</comment>
<comment type="disease" evidence="11">
    <disease id="DI-03886">
        <name>Left ventricular non-compaction 9</name>
        <acronym>LVNC9</acronym>
        <description>A form of left ventricular non-compaction, a cardiomyopathy due to myocardial morphogenesis arrest and characterized by a hypertrophic left ventricle, a severely thickened 2-layered myocardium, numerous prominent trabeculations, deep intertrabecular recesses, and poor systolic function. Clinical manifestations are variable. Some affected individuals experience no symptoms at all, others develop heart failure. In some cases, left ventricular non-compaction is associated with other congenital heart anomalies. LVNC9 is an autosomal dominant condition.</description>
        <dbReference type="MIM" id="611878"/>
    </disease>
    <text>The disease is caused by variants affecting the gene represented in this entry.</text>
</comment>
<comment type="miscellaneous">
    <molecule>Isoform 2</molecule>
    <text evidence="26">Incomplete sequence.</text>
</comment>
<comment type="similarity">
    <text evidence="26">Belongs to the tropomyosin family.</text>
</comment>
<evidence type="ECO:0000250" key="1"/>
<evidence type="ECO:0000250" key="2">
    <source>
        <dbReference type="UniProtKB" id="P04268"/>
    </source>
</evidence>
<evidence type="ECO:0000250" key="3">
    <source>
        <dbReference type="UniProtKB" id="P04692"/>
    </source>
</evidence>
<evidence type="ECO:0000250" key="4">
    <source>
        <dbReference type="UniProtKB" id="P58771"/>
    </source>
</evidence>
<evidence type="ECO:0000256" key="5">
    <source>
        <dbReference type="SAM" id="MobiDB-lite"/>
    </source>
</evidence>
<evidence type="ECO:0000269" key="6">
    <source>
    </source>
</evidence>
<evidence type="ECO:0000269" key="7">
    <source>
    </source>
</evidence>
<evidence type="ECO:0000269" key="8">
    <source>
    </source>
</evidence>
<evidence type="ECO:0000269" key="9">
    <source>
    </source>
</evidence>
<evidence type="ECO:0000269" key="10">
    <source>
    </source>
</evidence>
<evidence type="ECO:0000269" key="11">
    <source>
    </source>
</evidence>
<evidence type="ECO:0000269" key="12">
    <source>
    </source>
</evidence>
<evidence type="ECO:0000269" key="13">
    <source>
    </source>
</evidence>
<evidence type="ECO:0000269" key="14">
    <source>
    </source>
</evidence>
<evidence type="ECO:0000269" key="15">
    <source>
    </source>
</evidence>
<evidence type="ECO:0000269" key="16">
    <source>
    </source>
</evidence>
<evidence type="ECO:0000269" key="17">
    <source>
    </source>
</evidence>
<evidence type="ECO:0000269" key="18">
    <source>
    </source>
</evidence>
<evidence type="ECO:0000269" key="19">
    <source ref="15"/>
</evidence>
<evidence type="ECO:0000303" key="20">
    <source>
    </source>
</evidence>
<evidence type="ECO:0000303" key="21">
    <source>
    </source>
</evidence>
<evidence type="ECO:0000303" key="22">
    <source>
    </source>
</evidence>
<evidence type="ECO:0000303" key="23">
    <source>
    </source>
</evidence>
<evidence type="ECO:0000303" key="24">
    <source>
    </source>
</evidence>
<evidence type="ECO:0000303" key="25">
    <source>
    </source>
</evidence>
<evidence type="ECO:0000305" key="26"/>
<evidence type="ECO:0007744" key="27">
    <source>
    </source>
</evidence>
<evidence type="ECO:0007744" key="28">
    <source>
    </source>
</evidence>
<evidence type="ECO:0007829" key="29">
    <source>
        <dbReference type="PDB" id="5KHT"/>
    </source>
</evidence>
<evidence type="ECO:0007829" key="30">
    <source>
        <dbReference type="PDB" id="8EFH"/>
    </source>
</evidence>
<gene>
    <name type="primary">TPM1</name>
    <name type="synonym">C15orf13</name>
    <name type="synonym">TMSA</name>
</gene>
<sequence>MDAIKKKMQMLKLDKENALDRAEQAEADKKAAEDRSKQLEDELVSLQKKLKGTEDELDKYSEALKDAQEKLELAEKKATDAEADVASLNRRIQLVEEELDRAQERLATALQKLEEAEKAADESERGMKVIESRAQKDEEKMEIQEIQLKEAKHIAEDADRKYEEVARKLVIIESDLERAEERAELSEGKCAELEEELKTVTNNLKSLEAQAEKYSQKEDRYEEEIKVLSDKLKEAETRAEFAERSVTKLEKSIDDLEDELYAQKLKYKAISEELDHALNDMTSI</sequence>
<organism>
    <name type="scientific">Homo sapiens</name>
    <name type="common">Human</name>
    <dbReference type="NCBI Taxonomy" id="9606"/>
    <lineage>
        <taxon>Eukaryota</taxon>
        <taxon>Metazoa</taxon>
        <taxon>Chordata</taxon>
        <taxon>Craniata</taxon>
        <taxon>Vertebrata</taxon>
        <taxon>Euteleostomi</taxon>
        <taxon>Mammalia</taxon>
        <taxon>Eutheria</taxon>
        <taxon>Euarchontoglires</taxon>
        <taxon>Primates</taxon>
        <taxon>Haplorrhini</taxon>
        <taxon>Catarrhini</taxon>
        <taxon>Hominidae</taxon>
        <taxon>Homo</taxon>
    </lineage>
</organism>
<feature type="chain" id="PRO_0000205620" description="Tropomyosin alpha-1 chain">
    <location>
        <begin position="1"/>
        <end position="284"/>
    </location>
</feature>
<feature type="region of interest" description="Disordered" evidence="5">
    <location>
        <begin position="1"/>
        <end position="38"/>
    </location>
</feature>
<feature type="region of interest" description="Disordered" evidence="5">
    <location>
        <begin position="116"/>
        <end position="136"/>
    </location>
</feature>
<feature type="coiled-coil region" evidence="1">
    <location>
        <begin position="1"/>
        <end position="284"/>
    </location>
</feature>
<feature type="compositionally biased region" description="Basic and acidic residues" evidence="5">
    <location>
        <begin position="12"/>
        <end position="38"/>
    </location>
</feature>
<feature type="modified residue" description="N-acetylmethionine" evidence="14">
    <location>
        <position position="1"/>
    </location>
</feature>
<feature type="modified residue" description="Phosphoserine" evidence="3">
    <location>
        <position position="45"/>
    </location>
</feature>
<feature type="modified residue" description="Phosphoserine" evidence="28">
    <location>
        <position position="174"/>
    </location>
</feature>
<feature type="modified residue" description="Phosphoserine" evidence="4">
    <location>
        <position position="186"/>
    </location>
</feature>
<feature type="modified residue" description="Phosphoserine" evidence="4">
    <location>
        <position position="206"/>
    </location>
</feature>
<feature type="modified residue" description="Phosphoserine" evidence="4">
    <location>
        <position position="252"/>
    </location>
</feature>
<feature type="modified residue" description="Phosphotyrosine" evidence="3">
    <location>
        <position position="261"/>
    </location>
</feature>
<feature type="modified residue" description="Phosphoserine" evidence="4">
    <location>
        <position position="271"/>
    </location>
</feature>
<feature type="modified residue" description="Phosphoserine; by DAPK1" evidence="10">
    <location>
        <position position="283"/>
    </location>
</feature>
<feature type="splice variant" id="VSP_006576" description="In isoform 2." evidence="23">
    <original>MDAIKKKMQMLKLDKENALDRAEQAEADKKAAEDRSKQLEDELVSLQKKLKGTEDELDKYSEALKDAQEKLELAEKKATD</original>
    <variation>MCRLRIFLRTASSEHLHERKLRET</variation>
    <location>
        <begin position="1"/>
        <end position="80"/>
    </location>
</feature>
<feature type="splice variant" id="VSP_017498" description="In isoform 5." evidence="21">
    <original>MDAIKKKMQMLKLDKENALDRAEQAEADKKAAEDRSKQLEDELVSLQKKLKGTEDELDKYSEALKDAQEKLELAEKKATD</original>
    <variation>MAGSSSLEAVRRKIRSLQEQADAAEERAGTLQRELDHERKLRET</variation>
    <location>
        <begin position="1"/>
        <end position="80"/>
    </location>
</feature>
<feature type="splice variant" id="VSP_036064" description="In isoform 6 and isoform 7." evidence="20 22">
    <original>DELVSLQKKLKGTEDELDKYSEALKDAQEKLELAEKKATD</original>
    <variation>EDIAAKEKLLRVSEDERDRVLEELHKAEDSLLAAEEAAAK</variation>
    <location>
        <begin position="41"/>
        <end position="80"/>
    </location>
</feature>
<feature type="splice variant" id="VSP_047297" description="In isoform 8." evidence="26">
    <original>DELVSLQKKLKGT</original>
    <variation>EDIAAKEKLLRVS</variation>
    <location>
        <begin position="41"/>
        <end position="53"/>
    </location>
</feature>
<feature type="splice variant" id="VSP_047298" description="In isoform 8." evidence="26">
    <original>LDKYSEALKDAQEKLELAEKKATD</original>
    <variation>RDRVLEELHKAEDSLLAAEEAAAK</variation>
    <location>
        <begin position="57"/>
        <end position="80"/>
    </location>
</feature>
<feature type="splice variant" id="VSP_006578" description="In isoform 2." evidence="23">
    <original>KCAELEEELKTVTNNLKSLEAQAE</original>
    <variation>QVRQLEEQLRIMDSDLESINAAED</variation>
    <location>
        <begin position="189"/>
        <end position="212"/>
    </location>
</feature>
<feature type="splice variant" id="VSP_006577" description="In isoform 3 and isoform 4." evidence="21 24 25">
    <original>KCAELEEELKTVTNNLKSLEAQAE</original>
    <variation>QVRQLEEQLRIMDQTLKALMAAED</variation>
    <location>
        <begin position="189"/>
        <end position="212"/>
    </location>
</feature>
<feature type="splice variant" id="VSP_047299" description="In isoform 8 and isoform 10." evidence="26">
    <original>KCAE</original>
    <variation>QVRQ</variation>
    <location>
        <begin position="189"/>
        <end position="192"/>
    </location>
</feature>
<feature type="splice variant" id="VSP_047300" description="In isoform 8 and isoform 10." evidence="26">
    <original>ELKTVTNNLKSLEAQAE</original>
    <variation>QLRIMDQTLKALMAAED</variation>
    <location>
        <begin position="196"/>
        <end position="212"/>
    </location>
</feature>
<feature type="splice variant" id="VSP_006579" description="In isoform 2, isoform 3, isoform 7, isoform 8 and isoform 9." evidence="22 23 24 25">
    <original>DELYAQKLKYKAISEELDHALNDMTSI</original>
    <variation>EKVAHAKEENLSMHQMLDQTLLELNNM</variation>
    <location>
        <begin position="258"/>
        <end position="284"/>
    </location>
</feature>
<feature type="splice variant" id="VSP_017499" description="In isoform 5." evidence="21">
    <original>ELYAQKLKYKAISEELDHALNDMTSI</original>
    <variation>QLYQQLEQNRRLTNELKLALNED</variation>
    <location>
        <begin position="259"/>
        <end position="284"/>
    </location>
</feature>
<feature type="splice variant" id="VSP_047301" description="In isoform 10." evidence="26">
    <original>I</original>
    <variation>M</variation>
    <location>
        <position position="284"/>
    </location>
</feature>
<feature type="sequence variant" id="VAR_043986" description="In CMD1Y; dbSNP:rs104894501." evidence="6">
    <original>E</original>
    <variation>K</variation>
    <location>
        <position position="40"/>
    </location>
</feature>
<feature type="sequence variant" id="VAR_043987" description="In CMD1Y; dbSNP:rs104894505." evidence="6">
    <original>E</original>
    <variation>K</variation>
    <location>
        <position position="54"/>
    </location>
</feature>
<feature type="sequence variant" id="VAR_013135" description="In CMH3; dbSNP:rs199476306." evidence="17">
    <original>A</original>
    <variation>V</variation>
    <location>
        <position position="63"/>
    </location>
</feature>
<feature type="sequence variant" id="VAR_007601" description="In CMH3; no change in homodimerization; no change in homodimer thermal stability; decreased actin binding; recessive effect in the homodimer; increased calcium-dependent regulation of myosin binding to actin filaments; dominant effect in the homodimer; dbSNP:rs104894503." evidence="12 15 16 17 18">
    <original>D</original>
    <variation>N</variation>
    <location>
        <position position="175"/>
    </location>
</feature>
<feature type="sequence variant" id="VAR_007602" description="In CMH3; no change in homodimerization; decreased in hom odimer thermal stability; decreased in actin binding; increased calcium-dependent regulation of myosin binding to actin filaments; dominant effect in the homodimer; dbSNP:rs104894502." evidence="12 16">
    <original>E</original>
    <variation>G</variation>
    <location>
        <position position="180"/>
    </location>
</feature>
<feature type="sequence variant" id="VAR_029452" description="In CMH3; dbSNP:rs104894502." evidence="8">
    <original>E</original>
    <variation>V</variation>
    <location>
        <position position="180"/>
    </location>
</feature>
<feature type="sequence variant" id="VAR_070121" description="In LVNC9; dbSNP:rs199476315." evidence="11">
    <original>E</original>
    <variation>K</variation>
    <location>
        <position position="192"/>
    </location>
</feature>
<feature type="sequence variant" id="VAR_070122" description="In LVNC9; dbSNP:rs199476319." evidence="11">
    <original>K</original>
    <variation>E</variation>
    <location>
        <position position="248"/>
    </location>
</feature>
<feature type="mutagenesis site" description="Impairs interaction with LMOD2 and TMOD1." evidence="13">
    <original>K</original>
    <variation>N</variation>
    <location>
        <position position="15"/>
    </location>
</feature>
<feature type="mutagenesis site" description="Loss of phosphorylation and decreased formation of actin stress fibers." evidence="10">
    <original>S</original>
    <variation>A</variation>
    <location>
        <position position="283"/>
    </location>
</feature>
<feature type="mutagenesis site" description="Increased formation of actin stress fibers." evidence="10">
    <original>S</original>
    <variation>E</variation>
    <location>
        <position position="283"/>
    </location>
</feature>
<feature type="sequence conflict" description="In Ref. 11; CAA30930." evidence="26" ref="11">
    <original>A</original>
    <variation>V</variation>
    <location>
        <position position="109"/>
    </location>
</feature>
<feature type="sequence conflict" description="In Ref. 4; AAT68294/AAT68295." evidence="26" ref="4">
    <original>N</original>
    <variation>D</variation>
    <location>
        <position position="203"/>
    </location>
</feature>
<feature type="helix" evidence="29">
    <location>
        <begin position="1"/>
        <end position="28"/>
    </location>
</feature>
<feature type="helix" evidence="30">
    <location>
        <begin position="46"/>
        <end position="209"/>
    </location>
</feature>
<feature type="modified residue" description="Phosphoserine" evidence="28">
    <location sequence="P09493-2">
        <position position="31"/>
    </location>
</feature>
<feature type="modified residue" description="N6-acetyllysine" evidence="27">
    <location sequence="P09493-3">
        <position position="213"/>
    </location>
</feature>
<feature type="modified residue" description="N6-acetyllysine" evidence="27">
    <location sequence="P09493-4">
        <position position="213"/>
    </location>
</feature>
<feature type="modified residue" description="Phosphoserine" evidence="28">
    <location sequence="P09493-5">
        <position position="51"/>
    </location>
</feature>
<feature type="modified residue" description="N6-acetyllysine" evidence="27">
    <location sequence="P09493-8">
        <position position="213"/>
    </location>
</feature>
<feature type="modified residue" description="N6-acetyllysine" evidence="27">
    <location sequence="P09493-10">
        <position position="213"/>
    </location>
</feature>
<dbReference type="EMBL" id="M19267">
    <property type="protein sequence ID" value="AAA36771.1"/>
    <property type="molecule type" value="mRNA"/>
</dbReference>
<dbReference type="EMBL" id="M19713">
    <property type="protein sequence ID" value="AAA61225.1"/>
    <property type="molecule type" value="mRNA"/>
</dbReference>
<dbReference type="EMBL" id="M19714">
    <property type="protein sequence ID" value="AAA61226.1"/>
    <property type="molecule type" value="mRNA"/>
</dbReference>
<dbReference type="EMBL" id="M19715">
    <property type="protein sequence ID" value="AAA61227.1"/>
    <property type="molecule type" value="mRNA"/>
</dbReference>
<dbReference type="EMBL" id="AY640414">
    <property type="protein sequence ID" value="AAT68294.1"/>
    <property type="molecule type" value="mRNA"/>
</dbReference>
<dbReference type="EMBL" id="AY640415">
    <property type="protein sequence ID" value="AAT68295.1"/>
    <property type="molecule type" value="mRNA"/>
</dbReference>
<dbReference type="EMBL" id="AK299387">
    <property type="protein sequence ID" value="BAH13023.1"/>
    <property type="molecule type" value="mRNA"/>
</dbReference>
<dbReference type="EMBL" id="AL050179">
    <property type="protein sequence ID" value="CAB43309.2"/>
    <property type="molecule type" value="mRNA"/>
</dbReference>
<dbReference type="EMBL" id="GU324929">
    <property type="protein sequence ID" value="ADL14500.1"/>
    <property type="molecule type" value="Genomic_DNA"/>
</dbReference>
<dbReference type="EMBL" id="GU324930">
    <property type="protein sequence ID" value="ADL14501.1"/>
    <property type="molecule type" value="Genomic_DNA"/>
</dbReference>
<dbReference type="EMBL" id="GU324933">
    <property type="protein sequence ID" value="ADL14504.1"/>
    <property type="molecule type" value="Genomic_DNA"/>
</dbReference>
<dbReference type="EMBL" id="GU324935">
    <property type="protein sequence ID" value="ADL14506.1"/>
    <property type="molecule type" value="Genomic_DNA"/>
</dbReference>
<dbReference type="EMBL" id="AC079328">
    <property type="status" value="NOT_ANNOTATED_CDS"/>
    <property type="molecule type" value="Genomic_DNA"/>
</dbReference>
<dbReference type="EMBL" id="CH471082">
    <property type="protein sequence ID" value="EAW77619.1"/>
    <property type="molecule type" value="Genomic_DNA"/>
</dbReference>
<dbReference type="EMBL" id="CH471082">
    <property type="protein sequence ID" value="EAW77622.1"/>
    <property type="molecule type" value="Genomic_DNA"/>
</dbReference>
<dbReference type="EMBL" id="CH471082">
    <property type="protein sequence ID" value="EAW77623.1"/>
    <property type="molecule type" value="Genomic_DNA"/>
</dbReference>
<dbReference type="EMBL" id="CH471082">
    <property type="protein sequence ID" value="EAW77627.1"/>
    <property type="molecule type" value="Genomic_DNA"/>
</dbReference>
<dbReference type="EMBL" id="CH471082">
    <property type="protein sequence ID" value="EAW77628.1"/>
    <property type="molecule type" value="Genomic_DNA"/>
</dbReference>
<dbReference type="EMBL" id="BC007433">
    <property type="protein sequence ID" value="AAH07433.1"/>
    <property type="molecule type" value="mRNA"/>
</dbReference>
<dbReference type="EMBL" id="BC050473">
    <property type="protein sequence ID" value="AAH50473.1"/>
    <property type="molecule type" value="mRNA"/>
</dbReference>
<dbReference type="EMBL" id="BC053545">
    <property type="protein sequence ID" value="AAH53545.1"/>
    <property type="molecule type" value="mRNA"/>
</dbReference>
<dbReference type="EMBL" id="X12369">
    <property type="protein sequence ID" value="CAA30930.1"/>
    <property type="molecule type" value="mRNA"/>
</dbReference>
<dbReference type="CCDS" id="CCDS10181.1">
    <molecule id="P09493-10"/>
</dbReference>
<dbReference type="CCDS" id="CCDS32262.1">
    <molecule id="P09493-7"/>
</dbReference>
<dbReference type="CCDS" id="CCDS32263.1">
    <molecule id="P09493-3"/>
</dbReference>
<dbReference type="CCDS" id="CCDS32264.1">
    <molecule id="P09493-5"/>
</dbReference>
<dbReference type="CCDS" id="CCDS45273.1">
    <molecule id="P09493-1"/>
</dbReference>
<dbReference type="CCDS" id="CCDS58368.1">
    <molecule id="P09493-8"/>
</dbReference>
<dbReference type="CCDS" id="CCDS58369.1">
    <molecule id="P09493-9"/>
</dbReference>
<dbReference type="CCDS" id="CCDS86459.1">
    <molecule id="P09493-6"/>
</dbReference>
<dbReference type="PIR" id="A27674">
    <property type="entry name" value="A27674"/>
</dbReference>
<dbReference type="PIR" id="A27678">
    <property type="entry name" value="A25825"/>
</dbReference>
<dbReference type="PIR" id="S05585">
    <property type="entry name" value="S05585"/>
</dbReference>
<dbReference type="RefSeq" id="NP_000357.3">
    <molecule id="P09493-10"/>
    <property type="nucleotide sequence ID" value="NM_000366.5"/>
</dbReference>
<dbReference type="RefSeq" id="NP_001018004.1">
    <molecule id="P09493-9"/>
    <property type="nucleotide sequence ID" value="NM_001018004.2"/>
</dbReference>
<dbReference type="RefSeq" id="NP_001018005.1">
    <molecule id="P09493-1"/>
    <property type="nucleotide sequence ID" value="NM_001018005.2"/>
</dbReference>
<dbReference type="RefSeq" id="NP_001018006.1">
    <molecule id="P09493-3"/>
    <property type="nucleotide sequence ID" value="NM_001018006.2"/>
</dbReference>
<dbReference type="RefSeq" id="NP_001018007.1">
    <molecule id="P09493-7"/>
    <property type="nucleotide sequence ID" value="NM_001018007.2"/>
</dbReference>
<dbReference type="RefSeq" id="NP_001018008.1">
    <molecule id="P09493-5"/>
    <property type="nucleotide sequence ID" value="NM_001018008.2"/>
</dbReference>
<dbReference type="RefSeq" id="NP_001018020.1">
    <molecule id="P09493-8"/>
    <property type="nucleotide sequence ID" value="NM_001018020.2"/>
</dbReference>
<dbReference type="RefSeq" id="NP_001288173.1">
    <molecule id="P09493-6"/>
    <property type="nucleotide sequence ID" value="NM_001301244.2"/>
</dbReference>
<dbReference type="RefSeq" id="NP_001317273.1">
    <property type="nucleotide sequence ID" value="NM_001330344.1"/>
</dbReference>
<dbReference type="RefSeq" id="NP_001317275.1">
    <property type="nucleotide sequence ID" value="NM_001330346.1"/>
</dbReference>
<dbReference type="RefSeq" id="NP_001317280.1">
    <property type="nucleotide sequence ID" value="NM_001330351.1"/>
</dbReference>
<dbReference type="RefSeq" id="NP_001394259.1">
    <molecule id="P09493-10"/>
    <property type="nucleotide sequence ID" value="NM_001407330.1"/>
</dbReference>
<dbReference type="RefSeq" id="NP_001394260.1">
    <molecule id="P09493-4"/>
    <property type="nucleotide sequence ID" value="NM_001407331.1"/>
</dbReference>
<dbReference type="PDB" id="3MUD">
    <property type="method" value="X-ray"/>
    <property type="resolution" value="2.20 A"/>
    <property type="chains" value="C/D=1-29"/>
</dbReference>
<dbReference type="PDB" id="5KHT">
    <property type="method" value="X-ray"/>
    <property type="resolution" value="1.50 A"/>
    <property type="chains" value="A/B/C/D=1-28"/>
</dbReference>
<dbReference type="PDB" id="6UT2">
    <property type="method" value="NMR"/>
    <property type="chains" value="B/C=1-14"/>
</dbReference>
<dbReference type="PDB" id="6X5Z">
    <property type="method" value="EM"/>
    <property type="resolution" value="4.24 A"/>
    <property type="chains" value="O/P=1-284"/>
</dbReference>
<dbReference type="PDB" id="7UTI">
    <property type="method" value="EM"/>
    <property type="resolution" value="4.80 A"/>
    <property type="chains" value="W/b/e/f/g/h/i/j=1-284"/>
</dbReference>
<dbReference type="PDB" id="7UTL">
    <property type="method" value="EM"/>
    <property type="resolution" value="6.60 A"/>
    <property type="chains" value="W/Z/a/b/g/h/i/j=1-284"/>
</dbReference>
<dbReference type="PDB" id="8EFH">
    <property type="method" value="EM"/>
    <property type="resolution" value="3.30 A"/>
    <property type="chains" value="O/P=1-284"/>
</dbReference>
<dbReference type="PDB" id="8EFI">
    <property type="method" value="EM"/>
    <property type="resolution" value="3.40 A"/>
    <property type="chains" value="O/P=1-284"/>
</dbReference>
<dbReference type="PDB" id="8ENC">
    <property type="method" value="EM"/>
    <property type="resolution" value="3.60 A"/>
    <property type="chains" value="O/P=1-284"/>
</dbReference>
<dbReference type="PDB" id="8ZB7">
    <property type="method" value="EM"/>
    <property type="resolution" value="3.19 A"/>
    <property type="chains" value="L/N/O/P=45-210"/>
</dbReference>
<dbReference type="PDBsum" id="3MUD"/>
<dbReference type="PDBsum" id="5KHT"/>
<dbReference type="PDBsum" id="6UT2"/>
<dbReference type="PDBsum" id="6X5Z"/>
<dbReference type="PDBsum" id="7UTI"/>
<dbReference type="PDBsum" id="7UTL"/>
<dbReference type="PDBsum" id="8EFH"/>
<dbReference type="PDBsum" id="8EFI"/>
<dbReference type="PDBsum" id="8ENC"/>
<dbReference type="PDBsum" id="8ZB7"/>
<dbReference type="BMRB" id="P09493"/>
<dbReference type="EMDB" id="EMD-0728"/>
<dbReference type="EMDB" id="EMD-0729"/>
<dbReference type="EMDB" id="EMD-22067"/>
<dbReference type="EMDB" id="EMD-28082"/>
<dbReference type="EMDB" id="EMD-28083"/>
<dbReference type="EMDB" id="EMD-28270"/>
<dbReference type="EMDB" id="EMD-39896"/>
<dbReference type="SMR" id="P09493"/>
<dbReference type="BioGRID" id="113021">
    <property type="interactions" value="287"/>
</dbReference>
<dbReference type="FunCoup" id="P09493">
    <property type="interactions" value="635"/>
</dbReference>
<dbReference type="IntAct" id="P09493">
    <property type="interactions" value="115"/>
</dbReference>
<dbReference type="MINT" id="P09493"/>
<dbReference type="STRING" id="9606.ENSP00000351022"/>
<dbReference type="ChEMBL" id="CHEMBL4295705"/>
<dbReference type="DrugBank" id="DB11638">
    <property type="generic name" value="Artenimol"/>
</dbReference>
<dbReference type="DrugBank" id="DB12695">
    <property type="generic name" value="Phenethyl Isothiocyanate"/>
</dbReference>
<dbReference type="GlyGen" id="P09493">
    <property type="glycosylation" value="5 sites, 1 O-linked glycan (1 site)"/>
</dbReference>
<dbReference type="iPTMnet" id="P09493"/>
<dbReference type="MetOSite" id="P09493"/>
<dbReference type="PhosphoSitePlus" id="P09493"/>
<dbReference type="SwissPalm" id="P09493"/>
<dbReference type="BioMuta" id="TPM1"/>
<dbReference type="DMDM" id="136092"/>
<dbReference type="CPTAC" id="CPTAC-1462"/>
<dbReference type="CPTAC" id="CPTAC-1463"/>
<dbReference type="CPTAC" id="CPTAC-1464"/>
<dbReference type="jPOST" id="P09493"/>
<dbReference type="MassIVE" id="P09493"/>
<dbReference type="PaxDb" id="9606-ENSP00000351022"/>
<dbReference type="PeptideAtlas" id="P09493"/>
<dbReference type="ProteomicsDB" id="15181"/>
<dbReference type="ProteomicsDB" id="15182"/>
<dbReference type="ProteomicsDB" id="15183"/>
<dbReference type="ProteomicsDB" id="52229">
    <molecule id="P09493-1"/>
</dbReference>
<dbReference type="ProteomicsDB" id="52230">
    <molecule id="P09493-2"/>
</dbReference>
<dbReference type="ProteomicsDB" id="52231">
    <molecule id="P09493-3"/>
</dbReference>
<dbReference type="ProteomicsDB" id="52232">
    <molecule id="P09493-4"/>
</dbReference>
<dbReference type="ProteomicsDB" id="52233">
    <molecule id="P09493-5"/>
</dbReference>
<dbReference type="ProteomicsDB" id="52234">
    <molecule id="P09493-6"/>
</dbReference>
<dbReference type="ProteomicsDB" id="52235">
    <molecule id="P09493-7"/>
</dbReference>
<dbReference type="Pumba" id="P09493"/>
<dbReference type="Antibodypedia" id="635">
    <property type="antibodies" value="333 antibodies from 39 providers"/>
</dbReference>
<dbReference type="DNASU" id="7168"/>
<dbReference type="Ensembl" id="ENST00000267996.11">
    <molecule id="P09493-7"/>
    <property type="protein sequence ID" value="ENSP00000267996.7"/>
    <property type="gene ID" value="ENSG00000140416.26"/>
</dbReference>
<dbReference type="Ensembl" id="ENST00000288398.10">
    <molecule id="P09493-10"/>
    <property type="protein sequence ID" value="ENSP00000288398.6"/>
    <property type="gene ID" value="ENSG00000140416.26"/>
</dbReference>
<dbReference type="Ensembl" id="ENST00000334895.10">
    <molecule id="P09493-5"/>
    <property type="protein sequence ID" value="ENSP00000334624.4"/>
    <property type="gene ID" value="ENSG00000140416.26"/>
</dbReference>
<dbReference type="Ensembl" id="ENST00000358278.7">
    <molecule id="P09493-3"/>
    <property type="protein sequence ID" value="ENSP00000351022.3"/>
    <property type="gene ID" value="ENSG00000140416.26"/>
</dbReference>
<dbReference type="Ensembl" id="ENST00000403994.9">
    <molecule id="P09493-1"/>
    <property type="protein sequence ID" value="ENSP00000385107.4"/>
    <property type="gene ID" value="ENSG00000140416.26"/>
</dbReference>
<dbReference type="Ensembl" id="ENST00000559397.6">
    <molecule id="P09493-8"/>
    <property type="protein sequence ID" value="ENSP00000452879.1"/>
    <property type="gene ID" value="ENSG00000140416.26"/>
</dbReference>
<dbReference type="Ensembl" id="ENST00000559556.5">
    <molecule id="P09493-9"/>
    <property type="protein sequence ID" value="ENSP00000453941.1"/>
    <property type="gene ID" value="ENSG00000140416.26"/>
</dbReference>
<dbReference type="Ensembl" id="ENST00000561266.6">
    <molecule id="P09493-6"/>
    <property type="protein sequence ID" value="ENSP00000453955.2"/>
    <property type="gene ID" value="ENSG00000140416.26"/>
</dbReference>
<dbReference type="GeneID" id="7168"/>
<dbReference type="KEGG" id="hsa:7168"/>
<dbReference type="MANE-Select" id="ENST00000403994.9">
    <property type="protein sequence ID" value="ENSP00000385107.4"/>
    <property type="RefSeq nucleotide sequence ID" value="NM_001018005.2"/>
    <property type="RefSeq protein sequence ID" value="NP_001018005.1"/>
</dbReference>
<dbReference type="UCSC" id="uc002alg.4">
    <molecule id="P09493-1"/>
    <property type="organism name" value="human"/>
</dbReference>
<dbReference type="AGR" id="HGNC:12010"/>
<dbReference type="CTD" id="7168"/>
<dbReference type="DisGeNET" id="7168"/>
<dbReference type="GeneCards" id="TPM1"/>
<dbReference type="GeneReviews" id="TPM1"/>
<dbReference type="HGNC" id="HGNC:12010">
    <property type="gene designation" value="TPM1"/>
</dbReference>
<dbReference type="HPA" id="ENSG00000140416">
    <property type="expression patterns" value="Tissue enhanced (heart muscle, skeletal muscle, tongue)"/>
</dbReference>
<dbReference type="MalaCards" id="TPM1"/>
<dbReference type="MIM" id="115196">
    <property type="type" value="phenotype"/>
</dbReference>
<dbReference type="MIM" id="191010">
    <property type="type" value="gene"/>
</dbReference>
<dbReference type="MIM" id="611878">
    <property type="type" value="phenotype"/>
</dbReference>
<dbReference type="neXtProt" id="NX_P09493"/>
<dbReference type="OpenTargets" id="ENSG00000140416"/>
<dbReference type="Orphanet" id="154">
    <property type="disease" value="Familial isolated dilated cardiomyopathy"/>
</dbReference>
<dbReference type="Orphanet" id="54260">
    <property type="disease" value="Left ventricular noncompaction"/>
</dbReference>
<dbReference type="PharmGKB" id="PA36690"/>
<dbReference type="VEuPathDB" id="HostDB:ENSG00000140416"/>
<dbReference type="GeneTree" id="ENSGT01030000234542"/>
<dbReference type="HOGENOM" id="CLU_055027_0_0_1"/>
<dbReference type="InParanoid" id="P09493"/>
<dbReference type="OrthoDB" id="128924at2759"/>
<dbReference type="PAN-GO" id="P09493">
    <property type="GO annotations" value="4 GO annotations based on evolutionary models"/>
</dbReference>
<dbReference type="PhylomeDB" id="P09493"/>
<dbReference type="TreeFam" id="TF351519"/>
<dbReference type="PathwayCommons" id="P09493"/>
<dbReference type="Reactome" id="R-HSA-390522">
    <property type="pathway name" value="Striated Muscle Contraction"/>
</dbReference>
<dbReference type="Reactome" id="R-HSA-445355">
    <property type="pathway name" value="Smooth Muscle Contraction"/>
</dbReference>
<dbReference type="SignaLink" id="P09493"/>
<dbReference type="SIGNOR" id="P09493"/>
<dbReference type="BioGRID-ORCS" id="7168">
    <property type="hits" value="14 hits in 1165 CRISPR screens"/>
</dbReference>
<dbReference type="CD-CODE" id="FB4E32DD">
    <property type="entry name" value="Presynaptic clusters and postsynaptic densities"/>
</dbReference>
<dbReference type="ChiTaRS" id="TPM1">
    <property type="organism name" value="human"/>
</dbReference>
<dbReference type="GeneWiki" id="TPM1"/>
<dbReference type="GenomeRNAi" id="7168"/>
<dbReference type="Pharos" id="P09493">
    <property type="development level" value="Tbio"/>
</dbReference>
<dbReference type="PRO" id="PR:P09493"/>
<dbReference type="Proteomes" id="UP000005640">
    <property type="component" value="Chromosome 15"/>
</dbReference>
<dbReference type="RNAct" id="P09493">
    <property type="molecule type" value="protein"/>
</dbReference>
<dbReference type="Bgee" id="ENSG00000140416">
    <property type="expression patterns" value="Expressed in left ventricle myocardium and 216 other cell types or tissues"/>
</dbReference>
<dbReference type="ExpressionAtlas" id="P09493">
    <property type="expression patterns" value="baseline and differential"/>
</dbReference>
<dbReference type="GO" id="GO:0015629">
    <property type="term" value="C:actin cytoskeleton"/>
    <property type="evidence" value="ECO:0000314"/>
    <property type="project" value="HPA"/>
</dbReference>
<dbReference type="GO" id="GO:0005884">
    <property type="term" value="C:actin filament"/>
    <property type="evidence" value="ECO:0000318"/>
    <property type="project" value="GO_Central"/>
</dbReference>
<dbReference type="GO" id="GO:0032059">
    <property type="term" value="C:bleb"/>
    <property type="evidence" value="ECO:0000315"/>
    <property type="project" value="BHF-UCL"/>
</dbReference>
<dbReference type="GO" id="GO:0005856">
    <property type="term" value="C:cytoskeleton"/>
    <property type="evidence" value="ECO:0000304"/>
    <property type="project" value="UniProtKB"/>
</dbReference>
<dbReference type="GO" id="GO:0005829">
    <property type="term" value="C:cytosol"/>
    <property type="evidence" value="ECO:0000314"/>
    <property type="project" value="HPA"/>
</dbReference>
<dbReference type="GO" id="GO:0005862">
    <property type="term" value="C:muscle thin filament tropomyosin"/>
    <property type="evidence" value="ECO:0000304"/>
    <property type="project" value="ProtInc"/>
</dbReference>
<dbReference type="GO" id="GO:0032587">
    <property type="term" value="C:ruffle membrane"/>
    <property type="evidence" value="ECO:0000314"/>
    <property type="project" value="BHF-UCL"/>
</dbReference>
<dbReference type="GO" id="GO:0030017">
    <property type="term" value="C:sarcomere"/>
    <property type="evidence" value="ECO:0000304"/>
    <property type="project" value="BHF-UCL"/>
</dbReference>
<dbReference type="GO" id="GO:0001725">
    <property type="term" value="C:stress fiber"/>
    <property type="evidence" value="ECO:0000314"/>
    <property type="project" value="BHF-UCL"/>
</dbReference>
<dbReference type="GO" id="GO:0003779">
    <property type="term" value="F:actin binding"/>
    <property type="evidence" value="ECO:0000304"/>
    <property type="project" value="BHF-UCL"/>
</dbReference>
<dbReference type="GO" id="GO:0051015">
    <property type="term" value="F:actin filament binding"/>
    <property type="evidence" value="ECO:0000250"/>
    <property type="project" value="UniProtKB"/>
</dbReference>
<dbReference type="GO" id="GO:0008092">
    <property type="term" value="F:cytoskeletal protein binding"/>
    <property type="evidence" value="ECO:0000353"/>
    <property type="project" value="UniProtKB"/>
</dbReference>
<dbReference type="GO" id="GO:0042802">
    <property type="term" value="F:identical protein binding"/>
    <property type="evidence" value="ECO:0000250"/>
    <property type="project" value="UniProtKB"/>
</dbReference>
<dbReference type="GO" id="GO:0046982">
    <property type="term" value="F:protein heterodimerization activity"/>
    <property type="evidence" value="ECO:0000250"/>
    <property type="project" value="UniProtKB"/>
</dbReference>
<dbReference type="GO" id="GO:0042803">
    <property type="term" value="F:protein homodimerization activity"/>
    <property type="evidence" value="ECO:0000250"/>
    <property type="project" value="UniProtKB"/>
</dbReference>
<dbReference type="GO" id="GO:0005200">
    <property type="term" value="F:structural constituent of cytoskeleton"/>
    <property type="evidence" value="ECO:0000304"/>
    <property type="project" value="BHF-UCL"/>
</dbReference>
<dbReference type="GO" id="GO:0008307">
    <property type="term" value="F:structural constituent of muscle"/>
    <property type="evidence" value="ECO:0000304"/>
    <property type="project" value="ProtInc"/>
</dbReference>
<dbReference type="GO" id="GO:0007015">
    <property type="term" value="P:actin filament organization"/>
    <property type="evidence" value="ECO:0000318"/>
    <property type="project" value="GO_Central"/>
</dbReference>
<dbReference type="GO" id="GO:0060048">
    <property type="term" value="P:cardiac muscle contraction"/>
    <property type="evidence" value="ECO:0000315"/>
    <property type="project" value="BHF-UCL"/>
</dbReference>
<dbReference type="GO" id="GO:0034614">
    <property type="term" value="P:cellular response to reactive oxygen species"/>
    <property type="evidence" value="ECO:0000270"/>
    <property type="project" value="BHF-UCL"/>
</dbReference>
<dbReference type="GO" id="GO:0007010">
    <property type="term" value="P:cytoskeleton organization"/>
    <property type="evidence" value="ECO:0000304"/>
    <property type="project" value="BHF-UCL"/>
</dbReference>
<dbReference type="GO" id="GO:0030049">
    <property type="term" value="P:muscle filament sliding"/>
    <property type="evidence" value="ECO:0000250"/>
    <property type="project" value="BHF-UCL"/>
</dbReference>
<dbReference type="GO" id="GO:0030336">
    <property type="term" value="P:negative regulation of cell migration"/>
    <property type="evidence" value="ECO:0000250"/>
    <property type="project" value="BHF-UCL"/>
</dbReference>
<dbReference type="GO" id="GO:1904753">
    <property type="term" value="P:negative regulation of vascular associated smooth muscle cell migration"/>
    <property type="evidence" value="ECO:0000315"/>
    <property type="project" value="BHF-UCL"/>
</dbReference>
<dbReference type="GO" id="GO:1904706">
    <property type="term" value="P:negative regulation of vascular associated smooth muscle cell proliferation"/>
    <property type="evidence" value="ECO:0000315"/>
    <property type="project" value="BHF-UCL"/>
</dbReference>
<dbReference type="GO" id="GO:0045785">
    <property type="term" value="P:positive regulation of cell adhesion"/>
    <property type="evidence" value="ECO:0000250"/>
    <property type="project" value="BHF-UCL"/>
</dbReference>
<dbReference type="GO" id="GO:0003065">
    <property type="term" value="P:positive regulation of heart rate by epinephrine"/>
    <property type="evidence" value="ECO:0000250"/>
    <property type="project" value="BHF-UCL"/>
</dbReference>
<dbReference type="GO" id="GO:0051496">
    <property type="term" value="P:positive regulation of stress fiber assembly"/>
    <property type="evidence" value="ECO:0000250"/>
    <property type="project" value="BHF-UCL"/>
</dbReference>
<dbReference type="GO" id="GO:0008360">
    <property type="term" value="P:regulation of cell shape"/>
    <property type="evidence" value="ECO:0000315"/>
    <property type="project" value="BHF-UCL"/>
</dbReference>
<dbReference type="GO" id="GO:0008016">
    <property type="term" value="P:regulation of heart contraction"/>
    <property type="evidence" value="ECO:0000304"/>
    <property type="project" value="ProtInc"/>
</dbReference>
<dbReference type="GO" id="GO:0006937">
    <property type="term" value="P:regulation of muscle contraction"/>
    <property type="evidence" value="ECO:0000304"/>
    <property type="project" value="ProtInc"/>
</dbReference>
<dbReference type="GO" id="GO:0031529">
    <property type="term" value="P:ruffle organization"/>
    <property type="evidence" value="ECO:0000250"/>
    <property type="project" value="BHF-UCL"/>
</dbReference>
<dbReference type="GO" id="GO:0045214">
    <property type="term" value="P:sarcomere organization"/>
    <property type="evidence" value="ECO:0000315"/>
    <property type="project" value="BHF-UCL"/>
</dbReference>
<dbReference type="GO" id="GO:0055010">
    <property type="term" value="P:ventricular cardiac muscle tissue morphogenesis"/>
    <property type="evidence" value="ECO:0000315"/>
    <property type="project" value="BHF-UCL"/>
</dbReference>
<dbReference type="GO" id="GO:0042060">
    <property type="term" value="P:wound healing"/>
    <property type="evidence" value="ECO:0000250"/>
    <property type="project" value="BHF-UCL"/>
</dbReference>
<dbReference type="FunFam" id="1.20.5.1160:FF:000013">
    <property type="entry name" value="Tropomyosin 1 (alpha)"/>
    <property type="match status" value="1"/>
</dbReference>
<dbReference type="FunFam" id="1.20.5.170:FF:000005">
    <property type="entry name" value="Tropomyosin alpha-1 chain"/>
    <property type="match status" value="1"/>
</dbReference>
<dbReference type="FunFam" id="1.20.5.170:FF:000001">
    <property type="entry name" value="Tropomyosin alpha-1 chain isoform 1"/>
    <property type="match status" value="1"/>
</dbReference>
<dbReference type="FunFam" id="1.20.5.340:FF:000001">
    <property type="entry name" value="Tropomyosin alpha-1 chain isoform 2"/>
    <property type="match status" value="1"/>
</dbReference>
<dbReference type="Gene3D" id="1.20.5.170">
    <property type="match status" value="2"/>
</dbReference>
<dbReference type="Gene3D" id="1.20.5.340">
    <property type="match status" value="1"/>
</dbReference>
<dbReference type="InterPro" id="IPR000533">
    <property type="entry name" value="Tropomyosin"/>
</dbReference>
<dbReference type="PANTHER" id="PTHR19269">
    <property type="entry name" value="TROPOMYOSIN"/>
    <property type="match status" value="1"/>
</dbReference>
<dbReference type="Pfam" id="PF00261">
    <property type="entry name" value="Tropomyosin"/>
    <property type="match status" value="1"/>
</dbReference>
<dbReference type="PRINTS" id="PR00194">
    <property type="entry name" value="TROPOMYOSIN"/>
</dbReference>
<dbReference type="SUPFAM" id="SSF57997">
    <property type="entry name" value="Tropomyosin"/>
    <property type="match status" value="1"/>
</dbReference>
<dbReference type="PROSITE" id="PS00326">
    <property type="entry name" value="TROPOMYOSIN"/>
    <property type="match status" value="1"/>
</dbReference>